<reference key="1">
    <citation type="journal article" date="2007" name="Virology">
        <title>Principal host relationships and evolutionary history of the North American arenaviruses.</title>
        <authorList>
            <person name="Cajimat M.N."/>
            <person name="Milazzo M.L."/>
            <person name="Hess B.D."/>
            <person name="Rood M.P."/>
            <person name="Fulhorst C.F."/>
        </authorList>
    </citation>
    <scope>NUCLEOTIDE SEQUENCE [GENOMIC RNA]</scope>
</reference>
<proteinExistence type="inferred from homology"/>
<gene>
    <name evidence="2" type="primary">GPC</name>
    <name type="synonym">GP-C</name>
</gene>
<name>GLYC_BCNVU</name>
<accession>A0PJ25</accession>
<sequence>MGQLVSFIGEIPAIVHEALNVALIAVSIIAIMKGLINIWKSGLFQLIMFLILAGRSCSISIGHHLELQHFIINSTSLLPSMPTLCRINATNSLIRGPFSAQWGLDIFIGDLTILVNPEPGSKTKRMTATNITGCFPNNEDPDSVAQVLSWFFRGVHHDFHLDPTILCDESVTVFRIQMNLTERMYCDRIVSKLARLFGSFGDYCSKVGKKLVIIRNVTWSNQCHEDHVGSMQLILQNAHNQVMRFRKLQNFFSWSLVDSAGNSMPGGYCLEKWMLVASELKCFGNTAVAKCNINHDSEFCDMLRLFDYNKKAIVNLQDKTKAQLDSLIDAVNSLISDNLITKNKIRELMNIPYCNYTKFWYVNHTGLNVHSLPKCWHVRNGSYLNESDFRNEWIIESDHLVSEILAKEYEERQKRTPLSLVDLCFWSTLFYTASIFLHLLHIPTHRHIIGEGCPKPHRLTSDSLCACGFFQLKGRPTRWARIP</sequence>
<evidence type="ECO:0000250" key="1">
    <source>
        <dbReference type="UniProtKB" id="P26313"/>
    </source>
</evidence>
<evidence type="ECO:0000255" key="2">
    <source>
        <dbReference type="HAMAP-Rule" id="MF_04084"/>
    </source>
</evidence>
<dbReference type="EMBL" id="AY924391">
    <property type="protein sequence ID" value="AAX99345.1"/>
    <property type="molecule type" value="Genomic_RNA"/>
</dbReference>
<dbReference type="RefSeq" id="YP_001649226.1">
    <property type="nucleotide sequence ID" value="NC_010256.1"/>
</dbReference>
<dbReference type="SMR" id="A0PJ25"/>
<dbReference type="GlyCosmos" id="A0PJ25">
    <property type="glycosylation" value="9 sites, No reported glycans"/>
</dbReference>
<dbReference type="KEGG" id="vg:5848384"/>
<dbReference type="OrthoDB" id="4838at10239"/>
<dbReference type="Proteomes" id="UP000172257">
    <property type="component" value="Genome"/>
</dbReference>
<dbReference type="GO" id="GO:0044167">
    <property type="term" value="C:host cell endoplasmic reticulum membrane"/>
    <property type="evidence" value="ECO:0007669"/>
    <property type="project" value="UniProtKB-SubCell"/>
</dbReference>
<dbReference type="GO" id="GO:0044178">
    <property type="term" value="C:host cell Golgi membrane"/>
    <property type="evidence" value="ECO:0007669"/>
    <property type="project" value="UniProtKB-SubCell"/>
</dbReference>
<dbReference type="GO" id="GO:0020002">
    <property type="term" value="C:host cell plasma membrane"/>
    <property type="evidence" value="ECO:0007669"/>
    <property type="project" value="UniProtKB-SubCell"/>
</dbReference>
<dbReference type="GO" id="GO:0016020">
    <property type="term" value="C:membrane"/>
    <property type="evidence" value="ECO:0007669"/>
    <property type="project" value="UniProtKB-UniRule"/>
</dbReference>
<dbReference type="GO" id="GO:0019031">
    <property type="term" value="C:viral envelope"/>
    <property type="evidence" value="ECO:0007669"/>
    <property type="project" value="UniProtKB-UniRule"/>
</dbReference>
<dbReference type="GO" id="GO:0055036">
    <property type="term" value="C:virion membrane"/>
    <property type="evidence" value="ECO:0007669"/>
    <property type="project" value="UniProtKB-SubCell"/>
</dbReference>
<dbReference type="GO" id="GO:0046872">
    <property type="term" value="F:metal ion binding"/>
    <property type="evidence" value="ECO:0007669"/>
    <property type="project" value="UniProtKB-KW"/>
</dbReference>
<dbReference type="GO" id="GO:0039654">
    <property type="term" value="P:fusion of virus membrane with host endosome membrane"/>
    <property type="evidence" value="ECO:0007669"/>
    <property type="project" value="UniProtKB-UniRule"/>
</dbReference>
<dbReference type="GO" id="GO:0019065">
    <property type="term" value="P:receptor-mediated endocytosis of virus by host cell"/>
    <property type="evidence" value="ECO:0007669"/>
    <property type="project" value="UniProtKB-UniRule"/>
</dbReference>
<dbReference type="GO" id="GO:0019062">
    <property type="term" value="P:virion attachment to host cell"/>
    <property type="evidence" value="ECO:0007669"/>
    <property type="project" value="UniProtKB-UniRule"/>
</dbReference>
<dbReference type="Gene3D" id="6.10.140.1590">
    <property type="match status" value="1"/>
</dbReference>
<dbReference type="Gene3D" id="2.20.28.180">
    <property type="entry name" value="Arenavirus glycoprotein, zinc binding domain"/>
    <property type="match status" value="1"/>
</dbReference>
<dbReference type="HAMAP" id="MF_04084">
    <property type="entry name" value="ARENA_GPC"/>
    <property type="match status" value="1"/>
</dbReference>
<dbReference type="InterPro" id="IPR001535">
    <property type="entry name" value="Arena_glycoprot"/>
</dbReference>
<dbReference type="InterPro" id="IPR043015">
    <property type="entry name" value="Arena_glycoprot_zinc-bd"/>
</dbReference>
<dbReference type="Pfam" id="PF00798">
    <property type="entry name" value="Arena_glycoprot"/>
    <property type="match status" value="1"/>
</dbReference>
<dbReference type="PIRSF" id="PIRSF004028">
    <property type="entry name" value="GPC_ArenaV"/>
    <property type="match status" value="1"/>
</dbReference>
<comment type="function">
    <molecule>Glycoprotein G2</molecule>
    <text evidence="2">Class I viral fusion protein that directs fusion of viral and host endosomal membranes, leading to delivery of the nucleocapsid into the cytoplasm. Membrane fusion is mediated by irreversible conformational changes induced upon acidification in the endosome.</text>
</comment>
<comment type="function">
    <text evidence="2">Stable signal peptide (SSP): cleaved and functions as a signal peptide. In addition, it is also retained as the third component of the GP complex. The SSP is required for efficient glycoprotein expression, post-translational maturation cleavage of GP1 and GP2, glycoprotein transport to the cell surface plasma membrane, formation of infectious virus particles, and acid pH-dependent glycoprotein-mediated cell fusion.</text>
</comment>
<comment type="function">
    <molecule>Glycoprotein G1</molecule>
    <text evidence="2">Interacts with the host receptor.</text>
</comment>
<comment type="subunit">
    <molecule>Glycoprotein G1</molecule>
    <text evidence="2">Homotetramer; disulfide-linked.</text>
</comment>
<comment type="subunit">
    <molecule>Glycoprotein G2</molecule>
    <text evidence="2">Homotetramer. GP2 homotetramers bind through ionic interactions with GP1 homotetramers to form the GP complex together with the stable signal peptide. The GP-C polyprotein interacts with the host protease MBTPS1/SKI-1 resulting in the polyprotein processing.</text>
</comment>
<comment type="subcellular location">
    <molecule>Glycoprotein G1</molecule>
    <subcellularLocation>
        <location evidence="2">Virion membrane</location>
        <topology evidence="2">Peripheral membrane protein</topology>
    </subcellularLocation>
    <subcellularLocation>
        <location evidence="2">Host endoplasmic reticulum membrane</location>
        <topology evidence="2">Peripheral membrane protein</topology>
    </subcellularLocation>
    <subcellularLocation>
        <location evidence="2">Host Golgi apparatus membrane</location>
        <topology evidence="2">Peripheral membrane protein</topology>
    </subcellularLocation>
    <subcellularLocation>
        <location evidence="2">Host cell membrane</location>
        <topology evidence="2">Peripheral membrane protein</topology>
    </subcellularLocation>
</comment>
<comment type="subcellular location">
    <molecule>Glycoprotein G2</molecule>
    <subcellularLocation>
        <location evidence="2">Virion membrane</location>
        <topology evidence="2">Single-pass membrane protein</topology>
    </subcellularLocation>
    <subcellularLocation>
        <location evidence="2">Host endoplasmic reticulum membrane</location>
        <topology evidence="2">Single-pass membrane protein</topology>
    </subcellularLocation>
    <subcellularLocation>
        <location evidence="2">Host Golgi apparatus membrane</location>
        <topology evidence="2">Single-pass membrane protein</topology>
    </subcellularLocation>
    <subcellularLocation>
        <location evidence="2">Host cell membrane</location>
        <topology evidence="2">Single-pass membrane protein</topology>
    </subcellularLocation>
    <text evidence="2">Binding to the stable signal peptide masks endogenous ER localization signals in the cytoplasmic domain of G2 to ensure that only the fully assembled, tripartite GP complex is transported for virion assembly.</text>
</comment>
<comment type="subcellular location">
    <molecule>Stable signal peptide</molecule>
    <subcellularLocation>
        <location evidence="2">Virion membrane</location>
        <topology evidence="2">Multi-pass membrane protein</topology>
    </subcellularLocation>
    <subcellularLocation>
        <location evidence="2">Host endoplasmic reticulum membrane</location>
        <topology evidence="2">Multi-pass membrane protein</topology>
    </subcellularLocation>
    <subcellularLocation>
        <location evidence="2">Host Golgi apparatus membrane</location>
        <topology evidence="2">Multi-pass membrane protein</topology>
    </subcellularLocation>
    <subcellularLocation>
        <location evidence="2">Host cell membrane</location>
        <topology evidence="2">Multi-pass membrane protein</topology>
    </subcellularLocation>
</comment>
<comment type="domain">
    <text evidence="2">The cytoplasmic domain of GP2 plays a role in ER location. It also contains a zinc-binding domain that allows SSP retention in the GPC complex by accepting a cysteine from SSP as the fourth ligand.</text>
</comment>
<comment type="PTM">
    <molecule>Pre-glycoprotein polyprotein GP complex</molecule>
    <text evidence="2">Specific enzymatic cleavages in vivo yield mature proteins. GP-C polyprotein is cleaved in the endoplasmic reticulum by the host protease MBTPS1. Only cleaved glycoprotein is incorporated into virions.</text>
</comment>
<comment type="PTM">
    <molecule>Stable signal peptide</molecule>
    <text evidence="2">The SSP remains stably associated with the GP complex following cleavage by signal peptidase and plays crucial roles in the trafficking of GP through the secretory pathway.</text>
</comment>
<comment type="PTM">
    <molecule>Stable signal peptide</molecule>
    <text evidence="2">Myristoylation is necessary for GP2-mediated fusion activity.</text>
</comment>
<comment type="similarity">
    <text evidence="2">Belongs to the arenaviridae GPC protein family.</text>
</comment>
<protein>
    <recommendedName>
        <fullName evidence="2">Pre-glycoprotein polyprotein GP complex</fullName>
        <shortName evidence="2">Pre-GP-C</shortName>
    </recommendedName>
    <component>
        <recommendedName>
            <fullName evidence="2">Stable signal peptide</fullName>
            <shortName evidence="2">SSP</shortName>
        </recommendedName>
    </component>
    <component>
        <recommendedName>
            <fullName evidence="2">Glycoprotein G1</fullName>
            <shortName evidence="2">GP1</shortName>
        </recommendedName>
    </component>
    <component>
        <recommendedName>
            <fullName evidence="2">Glycoprotein G2</fullName>
            <shortName evidence="2">GP2</shortName>
        </recommendedName>
    </component>
</protein>
<feature type="initiator methionine" description="Removed; by host" evidence="2">
    <location>
        <position position="1"/>
    </location>
</feature>
<feature type="chain" id="PRO_0000361576" description="Pre-glycoprotein polyprotein GP complex" evidence="2">
    <location>
        <begin position="2"/>
        <end position="483"/>
    </location>
</feature>
<feature type="chain" id="PRO_0000361577" description="Stable signal peptide" evidence="2">
    <location>
        <begin position="2"/>
        <end position="58"/>
    </location>
</feature>
<feature type="chain" id="PRO_0000361578" description="Glycoprotein G1" evidence="2">
    <location>
        <begin position="59"/>
        <end position="249"/>
    </location>
</feature>
<feature type="chain" id="PRO_0000361579" description="Glycoprotein G2" evidence="2">
    <location>
        <begin position="250"/>
        <end position="483"/>
    </location>
</feature>
<feature type="topological domain" description="Extracellular" evidence="2">
    <location>
        <begin position="2"/>
        <end position="17"/>
    </location>
</feature>
<feature type="transmembrane region" description="Helical" evidence="2">
    <location>
        <begin position="18"/>
        <end position="32"/>
    </location>
</feature>
<feature type="topological domain" description="Cytoplasmic" evidence="2">
    <location>
        <position position="33"/>
    </location>
</feature>
<feature type="transmembrane region" description="Helical" evidence="2">
    <location>
        <begin position="34"/>
        <end position="53"/>
    </location>
</feature>
<feature type="topological domain" description="Extracellular" evidence="2">
    <location>
        <begin position="54"/>
        <end position="58"/>
    </location>
</feature>
<feature type="topological domain" description="Extracellular" evidence="2">
    <location>
        <begin position="59"/>
        <end position="422"/>
    </location>
</feature>
<feature type="transmembrane region" description="Helical" evidence="2">
    <location>
        <begin position="423"/>
        <end position="443"/>
    </location>
</feature>
<feature type="topological domain" description="Cytoplasmic" evidence="2">
    <location>
        <begin position="444"/>
        <end position="483"/>
    </location>
</feature>
<feature type="binding site" evidence="2">
    <location>
        <position position="57"/>
    </location>
    <ligand>
        <name>Zn(2+)</name>
        <dbReference type="ChEBI" id="CHEBI:29105"/>
        <label>1</label>
    </ligand>
</feature>
<feature type="binding site" evidence="2">
    <location>
        <position position="445"/>
    </location>
    <ligand>
        <name>Zn(2+)</name>
        <dbReference type="ChEBI" id="CHEBI:29105"/>
        <label>2</label>
    </ligand>
</feature>
<feature type="binding site" evidence="2">
    <location>
        <position position="447"/>
    </location>
    <ligand>
        <name>Zn(2+)</name>
        <dbReference type="ChEBI" id="CHEBI:29105"/>
        <label>2</label>
    </ligand>
</feature>
<feature type="binding site" evidence="2">
    <location>
        <position position="453"/>
    </location>
    <ligand>
        <name>Zn(2+)</name>
        <dbReference type="ChEBI" id="CHEBI:29105"/>
        <label>2</label>
    </ligand>
</feature>
<feature type="binding site" evidence="2">
    <location>
        <position position="457"/>
    </location>
    <ligand>
        <name>Zn(2+)</name>
        <dbReference type="ChEBI" id="CHEBI:29105"/>
        <label>1</label>
    </ligand>
</feature>
<feature type="binding site" evidence="2">
    <location>
        <position position="465"/>
    </location>
    <ligand>
        <name>Zn(2+)</name>
        <dbReference type="ChEBI" id="CHEBI:29105"/>
        <label>1</label>
    </ligand>
</feature>
<feature type="binding site" evidence="2">
    <location>
        <position position="467"/>
    </location>
    <ligand>
        <name>Zn(2+)</name>
        <dbReference type="ChEBI" id="CHEBI:29105"/>
        <label>1</label>
    </ligand>
</feature>
<feature type="site" description="Important for GP-C-mediated membrane fusion" evidence="1">
    <location>
        <position position="33"/>
    </location>
</feature>
<feature type="site" description="Cleavage; by host signal peptidase" evidence="2">
    <location>
        <begin position="58"/>
        <end position="59"/>
    </location>
</feature>
<feature type="site" description="Cleavage; by host MBTPS1" evidence="2">
    <location>
        <begin position="249"/>
        <end position="250"/>
    </location>
</feature>
<feature type="lipid moiety-binding region" description="N-myristoyl glycine; by host" evidence="2">
    <location>
        <position position="2"/>
    </location>
</feature>
<feature type="glycosylation site" description="N-linked (GlcNAc...) asparagine; by host" evidence="2">
    <location>
        <position position="73"/>
    </location>
</feature>
<feature type="glycosylation site" description="N-linked (GlcNAc...) asparagine; by host" evidence="2">
    <location>
        <position position="88"/>
    </location>
</feature>
<feature type="glycosylation site" description="N-linked (GlcNAc...) asparagine; by host" evidence="2">
    <location>
        <position position="130"/>
    </location>
</feature>
<feature type="glycosylation site" description="N-linked (GlcNAc...) asparagine; by host" evidence="2">
    <location>
        <position position="179"/>
    </location>
</feature>
<feature type="glycosylation site" description="N-linked (GlcNAc...) asparagine; by host" evidence="2">
    <location>
        <position position="216"/>
    </location>
</feature>
<feature type="glycosylation site" description="N-linked (GlcNAc...) asparagine; by host" evidence="2">
    <location>
        <position position="355"/>
    </location>
</feature>
<feature type="glycosylation site" description="N-linked (GlcNAc...) asparagine; by host" evidence="2">
    <location>
        <position position="363"/>
    </location>
</feature>
<feature type="glycosylation site" description="N-linked (GlcNAc...) asparagine; by host" evidence="2">
    <location>
        <position position="380"/>
    </location>
</feature>
<feature type="glycosylation site" description="N-linked (GlcNAc...) asparagine; by host" evidence="2">
    <location>
        <position position="385"/>
    </location>
</feature>
<feature type="disulfide bond" evidence="2">
    <location>
        <begin position="85"/>
        <end position="223"/>
    </location>
</feature>
<feature type="disulfide bond" evidence="2">
    <location>
        <begin position="186"/>
        <end position="204"/>
    </location>
</feature>
<feature type="disulfide bond" evidence="2">
    <location>
        <begin position="269"/>
        <end position="282"/>
    </location>
</feature>
<feature type="disulfide bond" evidence="2">
    <location>
        <begin position="291"/>
        <end position="300"/>
    </location>
</feature>
<feature type="disulfide bond" evidence="2">
    <location>
        <begin position="354"/>
        <end position="375"/>
    </location>
</feature>
<organismHost>
    <name type="scientific">Peromyscus californicus</name>
    <name type="common">California mouse</name>
    <dbReference type="NCBI Taxonomy" id="42520"/>
</organismHost>
<keyword id="KW-1015">Disulfide bond</keyword>
<keyword id="KW-1170">Fusion of virus membrane with host endosomal membrane</keyword>
<keyword id="KW-1168">Fusion of virus membrane with host membrane</keyword>
<keyword id="KW-0325">Glycoprotein</keyword>
<keyword id="KW-1032">Host cell membrane</keyword>
<keyword id="KW-1038">Host endoplasmic reticulum</keyword>
<keyword id="KW-1040">Host Golgi apparatus</keyword>
<keyword id="KW-1043">Host membrane</keyword>
<keyword id="KW-0945">Host-virus interaction</keyword>
<keyword id="KW-0449">Lipoprotein</keyword>
<keyword id="KW-0472">Membrane</keyword>
<keyword id="KW-0479">Metal-binding</keyword>
<keyword id="KW-0519">Myristate</keyword>
<keyword id="KW-0812">Transmembrane</keyword>
<keyword id="KW-1133">Transmembrane helix</keyword>
<keyword id="KW-1161">Viral attachment to host cell</keyword>
<keyword id="KW-0261">Viral envelope protein</keyword>
<keyword id="KW-1162">Viral penetration into host cytoplasm</keyword>
<keyword id="KW-0946">Virion</keyword>
<keyword id="KW-1164">Virus endocytosis by host</keyword>
<keyword id="KW-1160">Virus entry into host cell</keyword>
<keyword id="KW-0862">Zinc</keyword>
<organism>
    <name type="scientific">Bear Canyon mammarenavirus (isolate Mouse/United States/AV A0070039/2000)</name>
    <name type="common">BCNV</name>
    <dbReference type="NCBI Taxonomy" id="3052298"/>
    <lineage>
        <taxon>Viruses</taxon>
        <taxon>Riboviria</taxon>
        <taxon>Orthornavirae</taxon>
        <taxon>Negarnaviricota</taxon>
        <taxon>Polyploviricotina</taxon>
        <taxon>Ellioviricetes</taxon>
        <taxon>Bunyavirales</taxon>
        <taxon>Arenaviridae</taxon>
        <taxon>Mammarenavirus</taxon>
    </lineage>
</organism>